<evidence type="ECO:0000250" key="1">
    <source>
        <dbReference type="UniProtKB" id="Q0CCX5"/>
    </source>
</evidence>
<evidence type="ECO:0000250" key="2">
    <source>
        <dbReference type="UniProtKB" id="Q0CCX8"/>
    </source>
</evidence>
<evidence type="ECO:0000269" key="3">
    <source>
    </source>
</evidence>
<evidence type="ECO:0000269" key="4">
    <source>
    </source>
</evidence>
<evidence type="ECO:0000269" key="5">
    <source>
    </source>
</evidence>
<evidence type="ECO:0000303" key="6">
    <source>
    </source>
</evidence>
<evidence type="ECO:0000303" key="7">
    <source>
    </source>
</evidence>
<evidence type="ECO:0000305" key="8"/>
<evidence type="ECO:0000305" key="9">
    <source>
    </source>
</evidence>
<evidence type="ECO:0000305" key="10">
    <source>
    </source>
</evidence>
<organism>
    <name type="scientific">Aspergillus fumigatus (strain ATCC MYA-4609 / CBS 101355 / FGSC A1100 / Af293)</name>
    <name type="common">Neosartorya fumigata</name>
    <dbReference type="NCBI Taxonomy" id="330879"/>
    <lineage>
        <taxon>Eukaryota</taxon>
        <taxon>Fungi</taxon>
        <taxon>Dikarya</taxon>
        <taxon>Ascomycota</taxon>
        <taxon>Pezizomycotina</taxon>
        <taxon>Eurotiomycetes</taxon>
        <taxon>Eurotiomycetidae</taxon>
        <taxon>Eurotiales</taxon>
        <taxon>Aspergillaceae</taxon>
        <taxon>Aspergillus</taxon>
        <taxon>Aspergillus subgen. Fumigati</taxon>
    </lineage>
</organism>
<reference key="1">
    <citation type="journal article" date="2005" name="Nature">
        <title>Genomic sequence of the pathogenic and allergenic filamentous fungus Aspergillus fumigatus.</title>
        <authorList>
            <person name="Nierman W.C."/>
            <person name="Pain A."/>
            <person name="Anderson M.J."/>
            <person name="Wortman J.R."/>
            <person name="Kim H.S."/>
            <person name="Arroyo J."/>
            <person name="Berriman M."/>
            <person name="Abe K."/>
            <person name="Archer D.B."/>
            <person name="Bermejo C."/>
            <person name="Bennett J.W."/>
            <person name="Bowyer P."/>
            <person name="Chen D."/>
            <person name="Collins M."/>
            <person name="Coulsen R."/>
            <person name="Davies R."/>
            <person name="Dyer P.S."/>
            <person name="Farman M.L."/>
            <person name="Fedorova N."/>
            <person name="Fedorova N.D."/>
            <person name="Feldblyum T.V."/>
            <person name="Fischer R."/>
            <person name="Fosker N."/>
            <person name="Fraser A."/>
            <person name="Garcia J.L."/>
            <person name="Garcia M.J."/>
            <person name="Goble A."/>
            <person name="Goldman G.H."/>
            <person name="Gomi K."/>
            <person name="Griffith-Jones S."/>
            <person name="Gwilliam R."/>
            <person name="Haas B.J."/>
            <person name="Haas H."/>
            <person name="Harris D.E."/>
            <person name="Horiuchi H."/>
            <person name="Huang J."/>
            <person name="Humphray S."/>
            <person name="Jimenez J."/>
            <person name="Keller N."/>
            <person name="Khouri H."/>
            <person name="Kitamoto K."/>
            <person name="Kobayashi T."/>
            <person name="Konzack S."/>
            <person name="Kulkarni R."/>
            <person name="Kumagai T."/>
            <person name="Lafton A."/>
            <person name="Latge J.-P."/>
            <person name="Li W."/>
            <person name="Lord A."/>
            <person name="Lu C."/>
            <person name="Majoros W.H."/>
            <person name="May G.S."/>
            <person name="Miller B.L."/>
            <person name="Mohamoud Y."/>
            <person name="Molina M."/>
            <person name="Monod M."/>
            <person name="Mouyna I."/>
            <person name="Mulligan S."/>
            <person name="Murphy L.D."/>
            <person name="O'Neil S."/>
            <person name="Paulsen I."/>
            <person name="Penalva M.A."/>
            <person name="Pertea M."/>
            <person name="Price C."/>
            <person name="Pritchard B.L."/>
            <person name="Quail M.A."/>
            <person name="Rabbinowitsch E."/>
            <person name="Rawlins N."/>
            <person name="Rajandream M.A."/>
            <person name="Reichard U."/>
            <person name="Renauld H."/>
            <person name="Robson G.D."/>
            <person name="Rodriguez de Cordoba S."/>
            <person name="Rodriguez-Pena J.M."/>
            <person name="Ronning C.M."/>
            <person name="Rutter S."/>
            <person name="Salzberg S.L."/>
            <person name="Sanchez M."/>
            <person name="Sanchez-Ferrero J.C."/>
            <person name="Saunders D."/>
            <person name="Seeger K."/>
            <person name="Squares R."/>
            <person name="Squares S."/>
            <person name="Takeuchi M."/>
            <person name="Tekaia F."/>
            <person name="Turner G."/>
            <person name="Vazquez de Aldana C.R."/>
            <person name="Weidman J."/>
            <person name="White O."/>
            <person name="Woodward J.R."/>
            <person name="Yu J.-H."/>
            <person name="Fraser C.M."/>
            <person name="Galagan J.E."/>
            <person name="Asai K."/>
            <person name="Machida M."/>
            <person name="Hall N."/>
            <person name="Barrell B.G."/>
            <person name="Denning D.W."/>
        </authorList>
    </citation>
    <scope>NUCLEOTIDE SEQUENCE [LARGE SCALE GENOMIC DNA]</scope>
    <source>
        <strain>ATCC MYA-4609 / CBS 101355 / FGSC A1100 / Af293</strain>
    </source>
</reference>
<reference key="2">
    <citation type="journal article" date="2012" name="PLoS ONE">
        <title>Trypacidin, a spore-borne toxin from Aspergillus fumigatus, is cytotoxic to lung cells.</title>
        <authorList>
            <person name="Gauthier T."/>
            <person name="Wang X."/>
            <person name="Sifuentes Dos Santos J."/>
            <person name="Fysikopoulos A."/>
            <person name="Tadrist S."/>
            <person name="Canlet C."/>
            <person name="Artigot M.P."/>
            <person name="Loiseau N."/>
            <person name="Oswald I.P."/>
            <person name="Puel O."/>
        </authorList>
    </citation>
    <scope>FUNCTION</scope>
    <scope>TISSUE SPECIFICITY</scope>
</reference>
<reference key="3">
    <citation type="journal article" date="2015" name="Appl. Microbiol. Biotechnol.">
        <title>Identification of the antiphagocytic trypacidin gene cluster in the human-pathogenic fungus Aspergillus fumigatus.</title>
        <authorList>
            <person name="Mattern D.J."/>
            <person name="Schoeler H."/>
            <person name="Weber J."/>
            <person name="Novohradska S."/>
            <person name="Kraibooj K."/>
            <person name="Dahse H.M."/>
            <person name="Hillmann F."/>
            <person name="Valiante V."/>
            <person name="Figge M.T."/>
            <person name="Brakhage A.A."/>
        </authorList>
    </citation>
    <scope>FUNCTION</scope>
</reference>
<reference key="4">
    <citation type="journal article" date="2016" name="Environ. Microbiol.">
        <title>Redundant synthesis of a conidial polyketide by two distinct secondary metabolite clusters in Aspergillus fumigatus.</title>
        <authorList>
            <person name="Throckmorton K."/>
            <person name="Lim F.Y."/>
            <person name="Kontoyiannis D.P."/>
            <person name="Zheng W."/>
            <person name="Keller N.P."/>
        </authorList>
    </citation>
    <scope>FUNCTION</scope>
</reference>
<sequence length="445" mass="49467">MATASQIRLRPRLGVARATDTNPDGALEAANRLLQKNHNEHHMFWRSVAGHNHVAHSVLNTLALGGGPGDLQRAFDDGAEIQVPIPPMDRDAAASLSTPDQFRARMGSLEQYPNFLVFFTKEIETRGYPAVVIEYCFSGTSIAESMFANLFEGLYHPLIHLALGIEFDQPSIVAEGLAQAACHDSMNIEPFLFGTDKLAKTQDAPIDLNTPLLSLFHAVRDNEVLRAAAHRDHGDGVARVRDGILGRAREEISLIAARFRVDVDELDHRAAEMISCAAYLAGSAQRPGKARKIDFFHLHAVTASLGLIVLLQQPWVTPEQKARLIEWKARVDLVWYAASGAVELRRKDIVDYRPRHGLTWDSLYQAVRRVHDDGHLAKFIRALKAGEQISRPFEQGKRAEAFPIKGSMWLRIAQMAYDSSAGRPIEEKWIWGAGFEPNWATVPAV</sequence>
<comment type="function">
    <text evidence="2 3 4 5">Questin oxidase; part of the gene cluster that mediates the biosynthesis of trypacidin, a mycotoxin with antiprotozoal activity and that plays a role in the infection process (PubMed:26242966, PubMed:26278536). The pathway begins with the synthesis of atrochrysone thioester by the polyketide synthase (PKS) tpcC (PubMed:26242966). The atrochrysone carboxyl ACP thioesterase tpcB then breaks the thioester bond and releases the atrochrysone carboxylic acid from tpcC (PubMed:26242966). The decarboxylase tpcK converts atrochrysone carboxylic acid to atrochrysone which is further reduced into emodin anthrone (PubMed:26242966). The next step is performed by the emodin anthrone oxygenase tpcL that catalyzes the oxidation of emodinanthrone to emodin (PubMed:26242966). Emodin O-methyltransferase encoded by tpcA catalyzes methylation of the 8-hydroxy group of emodin to form questin (PubMed:26242966). Ring cleavage of questin by questin oxidase tpcI leads to desmethylsulochrin via several intermediates including questin epoxide (By similarity). Another methylation step catalyzed by tpcM leads to the formation of sulochrin which is further converted to monomethylsulfochrin by tpcH. Finally, the tpcJ catalyzes the conversion of monomethylsulfochrin to trypacidin (PubMed:26242966). Trypacidin is toxic for human pulmonary and bronchial epithelial cells by initiating the intracellular formation of nitric oxide (NO) and hydrogen peroxide (H(2)O(2)), thus triggering host necrotic cell death (PubMed:22319557). The trypacidin pathway is also able to produce endocrocin via a distinct route from the endocrocin Enc pathway (PubMed:26242966).</text>
</comment>
<comment type="cofactor">
    <cofactor evidence="1">
        <name>NADPH</name>
        <dbReference type="ChEBI" id="CHEBI:57783"/>
    </cofactor>
</comment>
<comment type="pathway">
    <text evidence="10">Secondary metabolite biosynthesis.</text>
</comment>
<comment type="tissue specificity">
    <text evidence="9">Specifically expressed in conidia (PubMed:22319557).</text>
</comment>
<comment type="similarity">
    <text evidence="8">Belongs to the questin oxidase family.</text>
</comment>
<proteinExistence type="evidence at transcript level"/>
<protein>
    <recommendedName>
        <fullName evidence="1">Questin oxidase</fullName>
        <ecNumber evidence="1">1.-.-.-</ecNumber>
    </recommendedName>
    <alternativeName>
        <fullName evidence="7">Trypacidin synthesis protein K</fullName>
    </alternativeName>
</protein>
<feature type="chain" id="PRO_0000437101" description="Questin oxidase">
    <location>
        <begin position="1"/>
        <end position="445"/>
    </location>
</feature>
<accession>Q4WQY9</accession>
<name>TPCI_ASPFU</name>
<gene>
    <name evidence="6" type="primary">tpcI</name>
    <name evidence="7" type="synonym">tynI</name>
    <name type="ORF">AFUA_4G14500</name>
</gene>
<keyword id="KW-0560">Oxidoreductase</keyword>
<keyword id="KW-1185">Reference proteome</keyword>
<dbReference type="EC" id="1.-.-.-" evidence="1"/>
<dbReference type="EMBL" id="AAHF01000005">
    <property type="protein sequence ID" value="EAL89345.1"/>
    <property type="molecule type" value="Genomic_DNA"/>
</dbReference>
<dbReference type="RefSeq" id="XP_751383.1">
    <property type="nucleotide sequence ID" value="XM_746290.1"/>
</dbReference>
<dbReference type="SMR" id="Q4WQY9"/>
<dbReference type="STRING" id="330879.Q4WQY9"/>
<dbReference type="EnsemblFungi" id="EAL89345">
    <property type="protein sequence ID" value="EAL89345"/>
    <property type="gene ID" value="AFUA_4G14500"/>
</dbReference>
<dbReference type="GeneID" id="3509607"/>
<dbReference type="KEGG" id="afm:AFUA_4G14500"/>
<dbReference type="VEuPathDB" id="FungiDB:Afu4g14500"/>
<dbReference type="eggNOG" id="ENOG502S69W">
    <property type="taxonomic scope" value="Eukaryota"/>
</dbReference>
<dbReference type="HOGENOM" id="CLU_019145_2_1_1"/>
<dbReference type="InParanoid" id="Q4WQY9"/>
<dbReference type="OMA" id="WLKIARM"/>
<dbReference type="OrthoDB" id="10004862at2759"/>
<dbReference type="Proteomes" id="UP000002530">
    <property type="component" value="Chromosome 4"/>
</dbReference>
<dbReference type="GO" id="GO:0016491">
    <property type="term" value="F:oxidoreductase activity"/>
    <property type="evidence" value="ECO:0007669"/>
    <property type="project" value="UniProtKB-KW"/>
</dbReference>
<dbReference type="GO" id="GO:0044550">
    <property type="term" value="P:secondary metabolite biosynthetic process"/>
    <property type="evidence" value="ECO:0000318"/>
    <property type="project" value="GO_Central"/>
</dbReference>
<dbReference type="InterPro" id="IPR025337">
    <property type="entry name" value="Questin_oxidase-like"/>
</dbReference>
<dbReference type="PANTHER" id="PTHR35870:SF7">
    <property type="entry name" value="BAEYER-VILLIGER OXIDASE MDPL"/>
    <property type="match status" value="1"/>
</dbReference>
<dbReference type="PANTHER" id="PTHR35870">
    <property type="entry name" value="PROTEIN, PUTATIVE (AFU_ORTHOLOGUE AFUA_5G03330)-RELATED"/>
    <property type="match status" value="1"/>
</dbReference>
<dbReference type="Pfam" id="PF14027">
    <property type="entry name" value="Questin_oxidase"/>
    <property type="match status" value="1"/>
</dbReference>